<dbReference type="EMBL" id="Z82285">
    <property type="protein sequence ID" value="CAB05302.1"/>
    <property type="molecule type" value="Genomic_DNA"/>
</dbReference>
<dbReference type="EMBL" id="Z82285">
    <property type="protein sequence ID" value="CAD56248.1"/>
    <property type="molecule type" value="Genomic_DNA"/>
</dbReference>
<dbReference type="PIR" id="T25425">
    <property type="entry name" value="T25425"/>
</dbReference>
<dbReference type="RefSeq" id="NP_503069.1">
    <molecule id="Q9XUB9-1"/>
    <property type="nucleotide sequence ID" value="NM_070668.6"/>
</dbReference>
<dbReference type="RefSeq" id="NP_872104.1">
    <molecule id="Q9XUB9-2"/>
    <property type="nucleotide sequence ID" value="NM_182304.4"/>
</dbReference>
<dbReference type="SMR" id="Q9XUB9"/>
<dbReference type="BioGRID" id="43584">
    <property type="interactions" value="2"/>
</dbReference>
<dbReference type="FunCoup" id="Q9XUB9">
    <property type="interactions" value="1217"/>
</dbReference>
<dbReference type="IntAct" id="Q9XUB9">
    <property type="interactions" value="2"/>
</dbReference>
<dbReference type="MINT" id="Q9XUB9"/>
<dbReference type="STRING" id="6239.T28F3.1a.1"/>
<dbReference type="iPTMnet" id="Q9XUB9"/>
<dbReference type="PaxDb" id="6239-T28F3.1a"/>
<dbReference type="PeptideAtlas" id="Q9XUB9"/>
<dbReference type="EnsemblMetazoa" id="T28F3.1a.1">
    <molecule id="Q9XUB9-1"/>
    <property type="protein sequence ID" value="T28F3.1a.1"/>
    <property type="gene ID" value="WBGene00012128"/>
</dbReference>
<dbReference type="EnsemblMetazoa" id="T28F3.1b.1">
    <molecule id="Q9XUB9-2"/>
    <property type="protein sequence ID" value="T28F3.1b.1"/>
    <property type="gene ID" value="WBGene00012128"/>
</dbReference>
<dbReference type="GeneID" id="178508"/>
<dbReference type="KEGG" id="cel:CELE_T28F3.1"/>
<dbReference type="UCSC" id="T28F3.1a">
    <property type="organism name" value="c. elegans"/>
</dbReference>
<dbReference type="AGR" id="WB:WBGene00012128"/>
<dbReference type="CTD" id="178508"/>
<dbReference type="WormBase" id="T28F3.1a">
    <molecule id="Q9XUB9-1"/>
    <property type="protein sequence ID" value="CE19806"/>
    <property type="gene ID" value="WBGene00012128"/>
    <property type="gene designation" value="nra-1"/>
</dbReference>
<dbReference type="WormBase" id="T28F3.1b">
    <molecule id="Q9XUB9-2"/>
    <property type="protein sequence ID" value="CE09683"/>
    <property type="gene ID" value="WBGene00012128"/>
    <property type="gene designation" value="nra-1"/>
</dbReference>
<dbReference type="eggNOG" id="KOG1327">
    <property type="taxonomic scope" value="Eukaryota"/>
</dbReference>
<dbReference type="GeneTree" id="ENSGT00940000170481"/>
<dbReference type="InParanoid" id="Q9XUB9"/>
<dbReference type="OMA" id="DMHATIR"/>
<dbReference type="OrthoDB" id="5855668at2759"/>
<dbReference type="PhylomeDB" id="Q9XUB9"/>
<dbReference type="Reactome" id="R-CEL-9013405">
    <property type="pathway name" value="RHOD GTPase cycle"/>
</dbReference>
<dbReference type="Reactome" id="R-CEL-9013406">
    <property type="pathway name" value="RHOQ GTPase cycle"/>
</dbReference>
<dbReference type="PRO" id="PR:Q9XUB9"/>
<dbReference type="Proteomes" id="UP000001940">
    <property type="component" value="Chromosome IV"/>
</dbReference>
<dbReference type="Bgee" id="WBGene00012128">
    <property type="expression patterns" value="Expressed in germ line (C elegans) and 4 other cell types or tissues"/>
</dbReference>
<dbReference type="GO" id="GO:0005886">
    <property type="term" value="C:plasma membrane"/>
    <property type="evidence" value="ECO:0000314"/>
    <property type="project" value="WormBase"/>
</dbReference>
<dbReference type="GO" id="GO:0005544">
    <property type="term" value="F:calcium-dependent phospholipid binding"/>
    <property type="evidence" value="ECO:0000318"/>
    <property type="project" value="GO_Central"/>
</dbReference>
<dbReference type="GO" id="GO:0046872">
    <property type="term" value="F:metal ion binding"/>
    <property type="evidence" value="ECO:0007669"/>
    <property type="project" value="UniProtKB-KW"/>
</dbReference>
<dbReference type="GO" id="GO:0071277">
    <property type="term" value="P:cellular response to calcium ion"/>
    <property type="evidence" value="ECO:0000318"/>
    <property type="project" value="GO_Central"/>
</dbReference>
<dbReference type="GO" id="GO:0097120">
    <property type="term" value="P:receptor localization to synapse"/>
    <property type="evidence" value="ECO:0000315"/>
    <property type="project" value="WormBase"/>
</dbReference>
<dbReference type="CDD" id="cd04048">
    <property type="entry name" value="C2A_Copine"/>
    <property type="match status" value="1"/>
</dbReference>
<dbReference type="CDD" id="cd04047">
    <property type="entry name" value="C2B_Copine"/>
    <property type="match status" value="1"/>
</dbReference>
<dbReference type="CDD" id="cd01459">
    <property type="entry name" value="vWA_copine_like"/>
    <property type="match status" value="1"/>
</dbReference>
<dbReference type="FunFam" id="2.60.40.150:FF:000260">
    <property type="entry name" value="Nicotinic receptor-associated protein 1"/>
    <property type="match status" value="1"/>
</dbReference>
<dbReference type="FunFam" id="2.60.40.150:FF:000277">
    <property type="entry name" value="Nicotinic receptor-associated protein 1"/>
    <property type="match status" value="1"/>
</dbReference>
<dbReference type="Gene3D" id="2.60.40.150">
    <property type="entry name" value="C2 domain"/>
    <property type="match status" value="2"/>
</dbReference>
<dbReference type="InterPro" id="IPR000008">
    <property type="entry name" value="C2_dom"/>
</dbReference>
<dbReference type="InterPro" id="IPR035892">
    <property type="entry name" value="C2_domain_sf"/>
</dbReference>
<dbReference type="InterPro" id="IPR037768">
    <property type="entry name" value="C2B_Copine"/>
</dbReference>
<dbReference type="InterPro" id="IPR045052">
    <property type="entry name" value="Copine"/>
</dbReference>
<dbReference type="InterPro" id="IPR010734">
    <property type="entry name" value="Copine_C"/>
</dbReference>
<dbReference type="InterPro" id="IPR002035">
    <property type="entry name" value="VWF_A"/>
</dbReference>
<dbReference type="InterPro" id="IPR036465">
    <property type="entry name" value="vWFA_dom_sf"/>
</dbReference>
<dbReference type="PANTHER" id="PTHR10857">
    <property type="entry name" value="COPINE"/>
    <property type="match status" value="1"/>
</dbReference>
<dbReference type="PANTHER" id="PTHR10857:SF136">
    <property type="entry name" value="NICOTINIC RECEPTOR-ASSOCIATED PROTEIN 1"/>
    <property type="match status" value="1"/>
</dbReference>
<dbReference type="Pfam" id="PF00168">
    <property type="entry name" value="C2"/>
    <property type="match status" value="2"/>
</dbReference>
<dbReference type="Pfam" id="PF07002">
    <property type="entry name" value="Copine"/>
    <property type="match status" value="1"/>
</dbReference>
<dbReference type="SMART" id="SM00239">
    <property type="entry name" value="C2"/>
    <property type="match status" value="2"/>
</dbReference>
<dbReference type="SMART" id="SM00327">
    <property type="entry name" value="VWA"/>
    <property type="match status" value="1"/>
</dbReference>
<dbReference type="SUPFAM" id="SSF49562">
    <property type="entry name" value="C2 domain (Calcium/lipid-binding domain, CaLB)"/>
    <property type="match status" value="2"/>
</dbReference>
<dbReference type="SUPFAM" id="SSF53300">
    <property type="entry name" value="vWA-like"/>
    <property type="match status" value="1"/>
</dbReference>
<dbReference type="PROSITE" id="PS50004">
    <property type="entry name" value="C2"/>
    <property type="match status" value="2"/>
</dbReference>
<dbReference type="PROSITE" id="PS50234">
    <property type="entry name" value="VWFA"/>
    <property type="match status" value="1"/>
</dbReference>
<proteinExistence type="evidence at protein level"/>
<gene>
    <name type="primary">nra-1</name>
    <name type="ORF">T28F3.1</name>
</gene>
<feature type="chain" id="PRO_0000144851" description="Nicotinic receptor-associated protein 1">
    <location>
        <begin position="1"/>
        <end position="634"/>
    </location>
</feature>
<feature type="domain" description="C2 1" evidence="2">
    <location>
        <begin position="1"/>
        <end position="141"/>
    </location>
</feature>
<feature type="domain" description="C2 2" evidence="2">
    <location>
        <begin position="159"/>
        <end position="295"/>
    </location>
</feature>
<feature type="domain" description="VWFA" evidence="3">
    <location>
        <begin position="338"/>
        <end position="557"/>
    </location>
</feature>
<feature type="region of interest" description="Disordered" evidence="4">
    <location>
        <begin position="576"/>
        <end position="603"/>
    </location>
</feature>
<feature type="compositionally biased region" description="Basic and acidic residues" evidence="4">
    <location>
        <begin position="582"/>
        <end position="592"/>
    </location>
</feature>
<feature type="binding site" evidence="2">
    <location>
        <position position="29"/>
    </location>
    <ligand>
        <name>Ca(2+)</name>
        <dbReference type="ChEBI" id="CHEBI:29108"/>
        <label>2</label>
    </ligand>
</feature>
<feature type="binding site" evidence="2">
    <location>
        <position position="30"/>
    </location>
    <ligand>
        <name>Ca(2+)</name>
        <dbReference type="ChEBI" id="CHEBI:29108"/>
        <label>1</label>
    </ligand>
</feature>
<feature type="binding site" evidence="2">
    <location>
        <position position="30"/>
    </location>
    <ligand>
        <name>Ca(2+)</name>
        <dbReference type="ChEBI" id="CHEBI:29108"/>
        <label>2</label>
    </ligand>
</feature>
<feature type="binding site" evidence="2">
    <location>
        <position position="36"/>
    </location>
    <ligand>
        <name>Ca(2+)</name>
        <dbReference type="ChEBI" id="CHEBI:29108"/>
        <label>1</label>
    </ligand>
</feature>
<feature type="binding site" evidence="2">
    <location>
        <position position="105"/>
    </location>
    <ligand>
        <name>Ca(2+)</name>
        <dbReference type="ChEBI" id="CHEBI:29108"/>
        <label>1</label>
    </ligand>
</feature>
<feature type="binding site" evidence="2">
    <location>
        <position position="105"/>
    </location>
    <ligand>
        <name>Ca(2+)</name>
        <dbReference type="ChEBI" id="CHEBI:29108"/>
        <label>2</label>
    </ligand>
</feature>
<feature type="binding site" evidence="2">
    <location>
        <position position="107"/>
    </location>
    <ligand>
        <name>Ca(2+)</name>
        <dbReference type="ChEBI" id="CHEBI:29108"/>
        <label>1</label>
    </ligand>
</feature>
<feature type="binding site" evidence="2">
    <location>
        <position position="107"/>
    </location>
    <ligand>
        <name>Ca(2+)</name>
        <dbReference type="ChEBI" id="CHEBI:29108"/>
        <label>2</label>
    </ligand>
</feature>
<feature type="binding site" evidence="2">
    <location>
        <position position="119"/>
    </location>
    <ligand>
        <name>Ca(2+)</name>
        <dbReference type="ChEBI" id="CHEBI:29108"/>
        <label>2</label>
    </ligand>
</feature>
<feature type="binding site" evidence="2">
    <location>
        <position position="189"/>
    </location>
    <ligand>
        <name>Ca(2+)</name>
        <dbReference type="ChEBI" id="CHEBI:29108"/>
        <label>3</label>
    </ligand>
</feature>
<feature type="binding site" evidence="2">
    <location>
        <position position="189"/>
    </location>
    <ligand>
        <name>Ca(2+)</name>
        <dbReference type="ChEBI" id="CHEBI:29108"/>
        <label>4</label>
    </ligand>
</feature>
<feature type="binding site" evidence="2">
    <location>
        <position position="195"/>
    </location>
    <ligand>
        <name>Ca(2+)</name>
        <dbReference type="ChEBI" id="CHEBI:29108"/>
        <label>3</label>
    </ligand>
</feature>
<feature type="binding site" evidence="2">
    <location>
        <position position="251"/>
    </location>
    <ligand>
        <name>Ca(2+)</name>
        <dbReference type="ChEBI" id="CHEBI:29108"/>
        <label>3</label>
    </ligand>
</feature>
<feature type="binding site" evidence="2">
    <location>
        <position position="251"/>
    </location>
    <ligand>
        <name>Ca(2+)</name>
        <dbReference type="ChEBI" id="CHEBI:29108"/>
        <label>4</label>
    </ligand>
</feature>
<feature type="binding site" evidence="2">
    <location>
        <position position="253"/>
    </location>
    <ligand>
        <name>Ca(2+)</name>
        <dbReference type="ChEBI" id="CHEBI:29108"/>
        <label>3</label>
    </ligand>
</feature>
<feature type="binding site" evidence="2">
    <location>
        <position position="253"/>
    </location>
    <ligand>
        <name>Ca(2+)</name>
        <dbReference type="ChEBI" id="CHEBI:29108"/>
        <label>4</label>
    </ligand>
</feature>
<feature type="binding site" evidence="2">
    <location>
        <position position="271"/>
    </location>
    <ligand>
        <name>Ca(2+)</name>
        <dbReference type="ChEBI" id="CHEBI:29108"/>
        <label>4</label>
    </ligand>
</feature>
<feature type="splice variant" id="VSP_039297" description="In isoform b." evidence="7">
    <location>
        <begin position="258"/>
        <end position="269"/>
    </location>
</feature>
<protein>
    <recommendedName>
        <fullName>Nicotinic receptor-associated protein 1</fullName>
    </recommendedName>
</protein>
<evidence type="ECO:0000250" key="1">
    <source>
        <dbReference type="UniProtKB" id="Q99829"/>
    </source>
</evidence>
<evidence type="ECO:0000255" key="2">
    <source>
        <dbReference type="PROSITE-ProRule" id="PRU00041"/>
    </source>
</evidence>
<evidence type="ECO:0000255" key="3">
    <source>
        <dbReference type="PROSITE-ProRule" id="PRU00219"/>
    </source>
</evidence>
<evidence type="ECO:0000256" key="4">
    <source>
        <dbReference type="SAM" id="MobiDB-lite"/>
    </source>
</evidence>
<evidence type="ECO:0000269" key="5">
    <source>
    </source>
</evidence>
<evidence type="ECO:0000269" key="6">
    <source>
    </source>
</evidence>
<evidence type="ECO:0000305" key="7"/>
<reference key="1">
    <citation type="journal article" date="1998" name="Science">
        <title>Genome sequence of the nematode C. elegans: a platform for investigating biology.</title>
        <authorList>
            <consortium name="The C. elegans sequencing consortium"/>
        </authorList>
    </citation>
    <scope>NUCLEOTIDE SEQUENCE [LARGE SCALE GENOMIC DNA]</scope>
    <scope>ALTERNATIVE SPLICING</scope>
    <source>
        <strain>Bristol N2</strain>
    </source>
</reference>
<reference key="2">
    <citation type="journal article" date="2005" name="EMBO J.">
        <title>Identification and characterization of novel nicotinic receptor-associated proteins in Caenorhabditis elegans.</title>
        <authorList>
            <person name="Gottschalk A."/>
            <person name="Almedom R.B."/>
            <person name="Schedletzky T."/>
            <person name="Anderson S.D."/>
            <person name="Yates J.R. III"/>
            <person name="Schafer W.R."/>
        </authorList>
    </citation>
    <scope>FUNCTION</scope>
    <scope>INTERACTION WITH NICOTINIC ACETYLCHOLINE RECEPTOR</scope>
    <scope>SUBCELLULAR LOCATION</scope>
    <scope>TISSUE SPECIFICITY</scope>
    <scope>DISRUPTION PHENOTYPE</scope>
</reference>
<reference key="3">
    <citation type="journal article" date="2006" name="Nat. Cell Biol.">
        <title>Oocyte signals derived from polyunsaturated fatty acids control sperm recruitment in vivo.</title>
        <authorList>
            <person name="Kubagawa H.M."/>
            <person name="Watts J.L."/>
            <person name="Corrigan C."/>
            <person name="Edmonds J.W."/>
            <person name="Sztul E."/>
            <person name="Browse J."/>
            <person name="Miller M.A."/>
        </authorList>
    </citation>
    <scope>FUNCTION</scope>
    <scope>DISRUPTION PHENOTYPE</scope>
</reference>
<comment type="function">
    <text evidence="1 5 6">Exhibits calcium-dependent phospholipid binding properties (By similarity). May function in membrane trafficking. Regulates synaptic levels of nicotinic acetylcholine receptor subunit lev-1 and unc-38 in the nerve cord (PubMed:15990870). Involved in nicotinic acetylcholine receptor (nAChR)-mediated sensitivity to nicotine and levamisole (PubMed:15990870). Affects directional sperm motility (PubMed:16998478).</text>
</comment>
<comment type="cofactor">
    <cofactor evidence="2">
        <name>Ca(2+)</name>
        <dbReference type="ChEBI" id="CHEBI:29108"/>
    </cofactor>
</comment>
<comment type="subunit">
    <text evidence="6">Interacts with nicotinic acetylcholine receptor.</text>
</comment>
<comment type="subcellular location">
    <subcellularLocation>
        <location evidence="5">Cell membrane</location>
        <topology evidence="5">Peripheral membrane protein</topology>
    </subcellularLocation>
</comment>
<comment type="alternative products">
    <event type="alternative splicing"/>
    <isoform>
        <id>Q9XUB9-1</id>
        <name>a</name>
        <sequence type="displayed"/>
    </isoform>
    <isoform>
        <id>Q9XUB9-2</id>
        <name>b</name>
        <sequence type="described" ref="VSP_039297"/>
    </isoform>
</comment>
<comment type="tissue specificity">
    <text evidence="5">Expressed in head and tail neurons, ventral cord moto-neurons, body wall muscles and hypodermal cells of the vulva.</text>
</comment>
<comment type="domain">
    <text evidence="1">C2 domains are necessary for calcium-dependent cell membrane association. C2 domains are necessary for neuronal progenitor cell differentiation in a calcium-independent manner.</text>
</comment>
<comment type="disruption phenotype">
    <text evidence="5 6">Sperm directional motility defects (PubMed:16998478). RNAi-mediated knockdown causes a moderate resistance to nicotine-induced paralysis and a decrease in unc-38 synaptic expression along nerve cords without affecting lev-1 cellular expression levels in muscles (PubMed:15990870).</text>
</comment>
<comment type="similarity">
    <text evidence="7">Belongs to the copine family.</text>
</comment>
<name>NRA1_CAEEL</name>
<keyword id="KW-0025">Alternative splicing</keyword>
<keyword id="KW-0106">Calcium</keyword>
<keyword id="KW-1003">Cell membrane</keyword>
<keyword id="KW-0472">Membrane</keyword>
<keyword id="KW-0479">Metal-binding</keyword>
<keyword id="KW-1185">Reference proteome</keyword>
<keyword id="KW-0677">Repeat</keyword>
<sequence length="634" mass="71101">MNQPIGIADSSRPKTNVRLTISANNLMDLDVFSKSDPICLIYEKTSGRKATTTEEITVPTWKDKQWTERGRTEVVMNNLNPQFTKTFLLPYFFEETQLLRFEIYDADSPTVGQDLSSHDFLGRFECVLAQIVSYSTLKAHLGKTGQIGAQWRNKDKNTKTGSITIYAEEDEKAEKIQFDVCGEGLDKKDFFGKSDPYLNFKRKFDDGSTHLIHRTEVKPKTLDPRWATVQINTQTLCAKDGDRPIIIECYDHDKWKKGEEPRGDAKFSRDDLIGTAQTTLNELLRGSSDAVEILLTNEKKKAKKGDKYKCSGTLKIWNSRIVIEPTFLDFISGGTQLDFAVAVDFTASNGPPKSSSSLHFMSADRPNQYELALRSVLSICQHYNSSKTFEAFGFGAKLPNQSSVSAIFPLDLQRGTSEVVGITGVMTAYRHALSNVQLYGPTNFAPIIENVARKAQNMIHDSARYQILLIITDGIISDMHATIRSIISASGLPLSIIIIGVGNEDFEKMHELDSDDALLQQDSRIAQRDIVQFVTMREFLNNGQGLYLDPDVIQENLAREVLYEVPAQLTGYMKQRGFQPRPVDDPWRRDSPPPEFDPILDGTGRRAPMLQAPPAGFQYPVYADTSIASAPPMY</sequence>
<accession>Q9XUB9</accession>
<accession>Q8I4F4</accession>
<organism>
    <name type="scientific">Caenorhabditis elegans</name>
    <dbReference type="NCBI Taxonomy" id="6239"/>
    <lineage>
        <taxon>Eukaryota</taxon>
        <taxon>Metazoa</taxon>
        <taxon>Ecdysozoa</taxon>
        <taxon>Nematoda</taxon>
        <taxon>Chromadorea</taxon>
        <taxon>Rhabditida</taxon>
        <taxon>Rhabditina</taxon>
        <taxon>Rhabditomorpha</taxon>
        <taxon>Rhabditoidea</taxon>
        <taxon>Rhabditidae</taxon>
        <taxon>Peloderinae</taxon>
        <taxon>Caenorhabditis</taxon>
    </lineage>
</organism>